<gene>
    <name evidence="1" type="primary">gcvP</name>
    <name type="ordered locus">Rmet_3482</name>
</gene>
<name>GCSP_CUPMC</name>
<comment type="function">
    <text evidence="1">The glycine cleavage system catalyzes the degradation of glycine. The P protein binds the alpha-amino group of glycine through its pyridoxal phosphate cofactor; CO(2) is released and the remaining methylamine moiety is then transferred to the lipoamide cofactor of the H protein.</text>
</comment>
<comment type="catalytic activity">
    <reaction evidence="1">
        <text>N(6)-[(R)-lipoyl]-L-lysyl-[glycine-cleavage complex H protein] + glycine + H(+) = N(6)-[(R)-S(8)-aminomethyldihydrolipoyl]-L-lysyl-[glycine-cleavage complex H protein] + CO2</text>
        <dbReference type="Rhea" id="RHEA:24304"/>
        <dbReference type="Rhea" id="RHEA-COMP:10494"/>
        <dbReference type="Rhea" id="RHEA-COMP:10495"/>
        <dbReference type="ChEBI" id="CHEBI:15378"/>
        <dbReference type="ChEBI" id="CHEBI:16526"/>
        <dbReference type="ChEBI" id="CHEBI:57305"/>
        <dbReference type="ChEBI" id="CHEBI:83099"/>
        <dbReference type="ChEBI" id="CHEBI:83143"/>
        <dbReference type="EC" id="1.4.4.2"/>
    </reaction>
</comment>
<comment type="cofactor">
    <cofactor evidence="1">
        <name>pyridoxal 5'-phosphate</name>
        <dbReference type="ChEBI" id="CHEBI:597326"/>
    </cofactor>
</comment>
<comment type="subunit">
    <text evidence="1">The glycine cleavage system is composed of four proteins: P, T, L and H.</text>
</comment>
<comment type="similarity">
    <text evidence="1">Belongs to the GcvP family.</text>
</comment>
<feature type="chain" id="PRO_1000045598" description="Glycine dehydrogenase (decarboxylating)">
    <location>
        <begin position="1"/>
        <end position="974"/>
    </location>
</feature>
<feature type="modified residue" description="N6-(pyridoxal phosphate)lysine" evidence="1">
    <location>
        <position position="720"/>
    </location>
</feature>
<dbReference type="EC" id="1.4.4.2" evidence="1"/>
<dbReference type="EMBL" id="CP000352">
    <property type="protein sequence ID" value="ABF10354.1"/>
    <property type="molecule type" value="Genomic_DNA"/>
</dbReference>
<dbReference type="RefSeq" id="WP_011517911.1">
    <property type="nucleotide sequence ID" value="NC_007973.1"/>
</dbReference>
<dbReference type="SMR" id="Q1LHM2"/>
<dbReference type="STRING" id="266264.Rmet_3482"/>
<dbReference type="KEGG" id="rme:Rmet_3482"/>
<dbReference type="eggNOG" id="COG0403">
    <property type="taxonomic scope" value="Bacteria"/>
</dbReference>
<dbReference type="eggNOG" id="COG1003">
    <property type="taxonomic scope" value="Bacteria"/>
</dbReference>
<dbReference type="HOGENOM" id="CLU_004620_3_2_4"/>
<dbReference type="Proteomes" id="UP000002429">
    <property type="component" value="Chromosome"/>
</dbReference>
<dbReference type="GO" id="GO:0005829">
    <property type="term" value="C:cytosol"/>
    <property type="evidence" value="ECO:0007669"/>
    <property type="project" value="TreeGrafter"/>
</dbReference>
<dbReference type="GO" id="GO:0005960">
    <property type="term" value="C:glycine cleavage complex"/>
    <property type="evidence" value="ECO:0007669"/>
    <property type="project" value="TreeGrafter"/>
</dbReference>
<dbReference type="GO" id="GO:0016594">
    <property type="term" value="F:glycine binding"/>
    <property type="evidence" value="ECO:0007669"/>
    <property type="project" value="TreeGrafter"/>
</dbReference>
<dbReference type="GO" id="GO:0004375">
    <property type="term" value="F:glycine dehydrogenase (decarboxylating) activity"/>
    <property type="evidence" value="ECO:0007669"/>
    <property type="project" value="UniProtKB-EC"/>
</dbReference>
<dbReference type="GO" id="GO:0030170">
    <property type="term" value="F:pyridoxal phosphate binding"/>
    <property type="evidence" value="ECO:0007669"/>
    <property type="project" value="TreeGrafter"/>
</dbReference>
<dbReference type="GO" id="GO:0019464">
    <property type="term" value="P:glycine decarboxylation via glycine cleavage system"/>
    <property type="evidence" value="ECO:0007669"/>
    <property type="project" value="UniProtKB-UniRule"/>
</dbReference>
<dbReference type="CDD" id="cd00613">
    <property type="entry name" value="GDC-P"/>
    <property type="match status" value="2"/>
</dbReference>
<dbReference type="FunFam" id="3.40.640.10:FF:000005">
    <property type="entry name" value="Glycine dehydrogenase (decarboxylating), mitochondrial"/>
    <property type="match status" value="1"/>
</dbReference>
<dbReference type="FunFam" id="3.90.1150.10:FF:000007">
    <property type="entry name" value="Glycine dehydrogenase (decarboxylating), mitochondrial"/>
    <property type="match status" value="1"/>
</dbReference>
<dbReference type="FunFam" id="3.40.640.10:FF:000007">
    <property type="entry name" value="glycine dehydrogenase (Decarboxylating), mitochondrial"/>
    <property type="match status" value="1"/>
</dbReference>
<dbReference type="Gene3D" id="3.90.1150.10">
    <property type="entry name" value="Aspartate Aminotransferase, domain 1"/>
    <property type="match status" value="2"/>
</dbReference>
<dbReference type="Gene3D" id="3.40.640.10">
    <property type="entry name" value="Type I PLP-dependent aspartate aminotransferase-like (Major domain)"/>
    <property type="match status" value="2"/>
</dbReference>
<dbReference type="HAMAP" id="MF_00711">
    <property type="entry name" value="GcvP"/>
    <property type="match status" value="1"/>
</dbReference>
<dbReference type="InterPro" id="IPR003437">
    <property type="entry name" value="GcvP"/>
</dbReference>
<dbReference type="InterPro" id="IPR049316">
    <property type="entry name" value="GDC-P_C"/>
</dbReference>
<dbReference type="InterPro" id="IPR049315">
    <property type="entry name" value="GDC-P_N"/>
</dbReference>
<dbReference type="InterPro" id="IPR020581">
    <property type="entry name" value="GDC_P"/>
</dbReference>
<dbReference type="InterPro" id="IPR015424">
    <property type="entry name" value="PyrdxlP-dep_Trfase"/>
</dbReference>
<dbReference type="InterPro" id="IPR015421">
    <property type="entry name" value="PyrdxlP-dep_Trfase_major"/>
</dbReference>
<dbReference type="InterPro" id="IPR015422">
    <property type="entry name" value="PyrdxlP-dep_Trfase_small"/>
</dbReference>
<dbReference type="NCBIfam" id="TIGR00461">
    <property type="entry name" value="gcvP"/>
    <property type="match status" value="1"/>
</dbReference>
<dbReference type="NCBIfam" id="NF003346">
    <property type="entry name" value="PRK04366.1"/>
    <property type="match status" value="1"/>
</dbReference>
<dbReference type="PANTHER" id="PTHR11773:SF1">
    <property type="entry name" value="GLYCINE DEHYDROGENASE (DECARBOXYLATING), MITOCHONDRIAL"/>
    <property type="match status" value="1"/>
</dbReference>
<dbReference type="PANTHER" id="PTHR11773">
    <property type="entry name" value="GLYCINE DEHYDROGENASE, DECARBOXYLATING"/>
    <property type="match status" value="1"/>
</dbReference>
<dbReference type="Pfam" id="PF21478">
    <property type="entry name" value="GcvP2_C"/>
    <property type="match status" value="1"/>
</dbReference>
<dbReference type="Pfam" id="PF02347">
    <property type="entry name" value="GDC-P"/>
    <property type="match status" value="2"/>
</dbReference>
<dbReference type="SUPFAM" id="SSF53383">
    <property type="entry name" value="PLP-dependent transferases"/>
    <property type="match status" value="2"/>
</dbReference>
<keyword id="KW-0560">Oxidoreductase</keyword>
<keyword id="KW-0663">Pyridoxal phosphate</keyword>
<keyword id="KW-1185">Reference proteome</keyword>
<organism>
    <name type="scientific">Cupriavidus metallidurans (strain ATCC 43123 / DSM 2839 / NBRC 102507 / CH34)</name>
    <name type="common">Ralstonia metallidurans</name>
    <dbReference type="NCBI Taxonomy" id="266264"/>
    <lineage>
        <taxon>Bacteria</taxon>
        <taxon>Pseudomonadati</taxon>
        <taxon>Pseudomonadota</taxon>
        <taxon>Betaproteobacteria</taxon>
        <taxon>Burkholderiales</taxon>
        <taxon>Burkholderiaceae</taxon>
        <taxon>Cupriavidus</taxon>
    </lineage>
</organism>
<protein>
    <recommendedName>
        <fullName evidence="1">Glycine dehydrogenase (decarboxylating)</fullName>
        <ecNumber evidence="1">1.4.4.2</ecNumber>
    </recommendedName>
    <alternativeName>
        <fullName evidence="1">Glycine cleavage system P-protein</fullName>
    </alternativeName>
    <alternativeName>
        <fullName evidence="1">Glycine decarboxylase</fullName>
    </alternativeName>
    <alternativeName>
        <fullName evidence="1">Glycine dehydrogenase (aminomethyl-transferring)</fullName>
    </alternativeName>
</protein>
<proteinExistence type="inferred from homology"/>
<reference key="1">
    <citation type="journal article" date="2010" name="PLoS ONE">
        <title>The complete genome sequence of Cupriavidus metallidurans strain CH34, a master survivalist in harsh and anthropogenic environments.</title>
        <authorList>
            <person name="Janssen P.J."/>
            <person name="Van Houdt R."/>
            <person name="Moors H."/>
            <person name="Monsieurs P."/>
            <person name="Morin N."/>
            <person name="Michaux A."/>
            <person name="Benotmane M.A."/>
            <person name="Leys N."/>
            <person name="Vallaeys T."/>
            <person name="Lapidus A."/>
            <person name="Monchy S."/>
            <person name="Medigue C."/>
            <person name="Taghavi S."/>
            <person name="McCorkle S."/>
            <person name="Dunn J."/>
            <person name="van der Lelie D."/>
            <person name="Mergeay M."/>
        </authorList>
    </citation>
    <scope>NUCLEOTIDE SEQUENCE [LARGE SCALE GENOMIC DNA]</scope>
    <source>
        <strain>ATCC 43123 / DSM 2839 / NBRC 102507 / CH34</strain>
    </source>
</reference>
<evidence type="ECO:0000255" key="1">
    <source>
        <dbReference type="HAMAP-Rule" id="MF_00711"/>
    </source>
</evidence>
<accession>Q1LHM2</accession>
<sequence>MNAPLPMNAAAQGARPTLAELEARDAFAARHIGPDSAEQQHMLKVLGFESRAALIDAVVPAAIRRRDGMSLGEFTAPLTEEAALGRLRALAGKNRVLKSFIGQGYYNTLTPGVILRNIFENPAWYTAYTPYQPEISQGRLEAMLNFQQMITDLTGLDIANASMLDEGTAAAEAMTLLQRVNKHASNTFYVAEDVLPQTLEVVRTRALPLGIEVKVGPAADAAQAHAFGVLLQYPGVNGDVADYRAIAEAVHASGGRVVAAADLLALTLIAAPGEWGADVTVGNSQRFGVPLGFGGPHAGYMAVKDEFKRSMPGRLVGVTIDAQGNKAYRLALQTREQHIRREKATSNICTAQVLLAVMASMYAVYHGPQGLKRIAQRVHRLTATLAAGLKTLGHTPLNATFFDTLTLETGFNTDAFHASATARGINLRHVDATRIGISFDETASRDDVIALWEIFAHGKAVPDFDTIEASVQDGFPATLARQSAYLTHPVFNTHHAEHEMLRYLRALADKDLALDRTMIPLGSCTMKLNATSEMIPVTWPEFSNIHPFAPLDQTVGYREMIDQLEAMLCAATGYAAVSLQPNAGSQGEYAGLLIIHAYHASRGESHRDICLIPSSAHGTNPASAQMAGMKVVVVACDENGNVDLADLAKKAEQHSKNLAAIMITYPSTHGVFEQGVQQICDIVHKHGGQVYVDGANMNAMVGVAAPGQFGGDVSHLNLHKTFCIPHGGGGPGVGPVAVGAHLADFLPNQDSVGYRRDENGIGGVSAAPFGSASILPISWMYIAMMGSAGLTAATENAILTANYVARRLSPHFPVLYTGQHGLVAHECILDLRPLQKATGISNEDVAKRLMDYGFHAPTMSFPVPGTLMIEPTESEALHELDRFIDAMIAIRGEIARVEDGSFDREDNPLKHAPHTAAVVVSDKWNHKYTREEAAYPVASLRTQKYWPPVGRADNVYGDRNLFCSCVPLSEYAED</sequence>